<proteinExistence type="inferred from homology"/>
<keyword id="KW-0963">Cytoplasm</keyword>
<keyword id="KW-0238">DNA-binding</keyword>
<keyword id="KW-0479">Metal-binding</keyword>
<keyword id="KW-0539">Nucleus</keyword>
<keyword id="KW-1185">Reference proteome</keyword>
<keyword id="KW-0862">Zinc</keyword>
<keyword id="KW-0863">Zinc-finger</keyword>
<name>YEU7_SCHPO</name>
<sequence length="165" mass="18427">MEQGGSGYRIEIAPNNRAKCKGSLCGRSKILAGTVRFGTFVDSGRFQSWAWKHWGCVTPRMLKNIKNRLGEDDIVNSLDGITALSQEWIDKVVDAINEGHVSESDERESRKLGEKMNVNSQKLKTSSPPKVVRKNKRHHTTVKSVLSDSDLDAEFTDGSEAYEDD</sequence>
<comment type="subcellular location">
    <subcellularLocation>
        <location evidence="3">Cytoplasm</location>
    </subcellularLocation>
    <subcellularLocation>
        <location evidence="1 3">Nucleus</location>
    </subcellularLocation>
</comment>
<feature type="chain" id="PRO_0000304025" description="PARP-type zinc finger-containing protein C13F5.07c">
    <location>
        <begin position="1"/>
        <end position="165"/>
    </location>
</feature>
<feature type="zinc finger region" description="PARP-type; degenerate" evidence="1">
    <location>
        <begin position="8"/>
        <end position="100"/>
    </location>
</feature>
<feature type="region of interest" description="Disordered" evidence="2">
    <location>
        <begin position="100"/>
        <end position="165"/>
    </location>
</feature>
<feature type="compositionally biased region" description="Basic and acidic residues" evidence="2">
    <location>
        <begin position="100"/>
        <end position="114"/>
    </location>
</feature>
<feature type="compositionally biased region" description="Polar residues" evidence="2">
    <location>
        <begin position="117"/>
        <end position="128"/>
    </location>
</feature>
<feature type="compositionally biased region" description="Basic residues" evidence="2">
    <location>
        <begin position="131"/>
        <end position="141"/>
    </location>
</feature>
<feature type="compositionally biased region" description="Acidic residues" evidence="2">
    <location>
        <begin position="149"/>
        <end position="165"/>
    </location>
</feature>
<organism>
    <name type="scientific">Schizosaccharomyces pombe (strain 972 / ATCC 24843)</name>
    <name type="common">Fission yeast</name>
    <dbReference type="NCBI Taxonomy" id="284812"/>
    <lineage>
        <taxon>Eukaryota</taxon>
        <taxon>Fungi</taxon>
        <taxon>Dikarya</taxon>
        <taxon>Ascomycota</taxon>
        <taxon>Taphrinomycotina</taxon>
        <taxon>Schizosaccharomycetes</taxon>
        <taxon>Schizosaccharomycetales</taxon>
        <taxon>Schizosaccharomycetaceae</taxon>
        <taxon>Schizosaccharomyces</taxon>
    </lineage>
</organism>
<accession>O13706</accession>
<evidence type="ECO:0000255" key="1">
    <source>
        <dbReference type="PROSITE-ProRule" id="PRU00264"/>
    </source>
</evidence>
<evidence type="ECO:0000256" key="2">
    <source>
        <dbReference type="SAM" id="MobiDB-lite"/>
    </source>
</evidence>
<evidence type="ECO:0000269" key="3">
    <source>
    </source>
</evidence>
<gene>
    <name type="ORF">SPAC13F5.07c</name>
</gene>
<reference key="1">
    <citation type="journal article" date="2002" name="Nature">
        <title>The genome sequence of Schizosaccharomyces pombe.</title>
        <authorList>
            <person name="Wood V."/>
            <person name="Gwilliam R."/>
            <person name="Rajandream M.A."/>
            <person name="Lyne M.H."/>
            <person name="Lyne R."/>
            <person name="Stewart A."/>
            <person name="Sgouros J.G."/>
            <person name="Peat N."/>
            <person name="Hayles J."/>
            <person name="Baker S.G."/>
            <person name="Basham D."/>
            <person name="Bowman S."/>
            <person name="Brooks K."/>
            <person name="Brown D."/>
            <person name="Brown S."/>
            <person name="Chillingworth T."/>
            <person name="Churcher C.M."/>
            <person name="Collins M."/>
            <person name="Connor R."/>
            <person name="Cronin A."/>
            <person name="Davis P."/>
            <person name="Feltwell T."/>
            <person name="Fraser A."/>
            <person name="Gentles S."/>
            <person name="Goble A."/>
            <person name="Hamlin N."/>
            <person name="Harris D.E."/>
            <person name="Hidalgo J."/>
            <person name="Hodgson G."/>
            <person name="Holroyd S."/>
            <person name="Hornsby T."/>
            <person name="Howarth S."/>
            <person name="Huckle E.J."/>
            <person name="Hunt S."/>
            <person name="Jagels K."/>
            <person name="James K.D."/>
            <person name="Jones L."/>
            <person name="Jones M."/>
            <person name="Leather S."/>
            <person name="McDonald S."/>
            <person name="McLean J."/>
            <person name="Mooney P."/>
            <person name="Moule S."/>
            <person name="Mungall K.L."/>
            <person name="Murphy L.D."/>
            <person name="Niblett D."/>
            <person name="Odell C."/>
            <person name="Oliver K."/>
            <person name="O'Neil S."/>
            <person name="Pearson D."/>
            <person name="Quail M.A."/>
            <person name="Rabbinowitsch E."/>
            <person name="Rutherford K.M."/>
            <person name="Rutter S."/>
            <person name="Saunders D."/>
            <person name="Seeger K."/>
            <person name="Sharp S."/>
            <person name="Skelton J."/>
            <person name="Simmonds M.N."/>
            <person name="Squares R."/>
            <person name="Squares S."/>
            <person name="Stevens K."/>
            <person name="Taylor K."/>
            <person name="Taylor R.G."/>
            <person name="Tivey A."/>
            <person name="Walsh S.V."/>
            <person name="Warren T."/>
            <person name="Whitehead S."/>
            <person name="Woodward J.R."/>
            <person name="Volckaert G."/>
            <person name="Aert R."/>
            <person name="Robben J."/>
            <person name="Grymonprez B."/>
            <person name="Weltjens I."/>
            <person name="Vanstreels E."/>
            <person name="Rieger M."/>
            <person name="Schaefer M."/>
            <person name="Mueller-Auer S."/>
            <person name="Gabel C."/>
            <person name="Fuchs M."/>
            <person name="Duesterhoeft A."/>
            <person name="Fritzc C."/>
            <person name="Holzer E."/>
            <person name="Moestl D."/>
            <person name="Hilbert H."/>
            <person name="Borzym K."/>
            <person name="Langer I."/>
            <person name="Beck A."/>
            <person name="Lehrach H."/>
            <person name="Reinhardt R."/>
            <person name="Pohl T.M."/>
            <person name="Eger P."/>
            <person name="Zimmermann W."/>
            <person name="Wedler H."/>
            <person name="Wambutt R."/>
            <person name="Purnelle B."/>
            <person name="Goffeau A."/>
            <person name="Cadieu E."/>
            <person name="Dreano S."/>
            <person name="Gloux S."/>
            <person name="Lelaure V."/>
            <person name="Mottier S."/>
            <person name="Galibert F."/>
            <person name="Aves S.J."/>
            <person name="Xiang Z."/>
            <person name="Hunt C."/>
            <person name="Moore K."/>
            <person name="Hurst S.M."/>
            <person name="Lucas M."/>
            <person name="Rochet M."/>
            <person name="Gaillardin C."/>
            <person name="Tallada V.A."/>
            <person name="Garzon A."/>
            <person name="Thode G."/>
            <person name="Daga R.R."/>
            <person name="Cruzado L."/>
            <person name="Jimenez J."/>
            <person name="Sanchez M."/>
            <person name="del Rey F."/>
            <person name="Benito J."/>
            <person name="Dominguez A."/>
            <person name="Revuelta J.L."/>
            <person name="Moreno S."/>
            <person name="Armstrong J."/>
            <person name="Forsburg S.L."/>
            <person name="Cerutti L."/>
            <person name="Lowe T."/>
            <person name="McCombie W.R."/>
            <person name="Paulsen I."/>
            <person name="Potashkin J."/>
            <person name="Shpakovski G.V."/>
            <person name="Ussery D."/>
            <person name="Barrell B.G."/>
            <person name="Nurse P."/>
        </authorList>
    </citation>
    <scope>NUCLEOTIDE SEQUENCE [LARGE SCALE GENOMIC DNA]</scope>
    <source>
        <strain>972 / ATCC 24843</strain>
    </source>
</reference>
<reference key="2">
    <citation type="journal article" date="2011" name="Science">
        <title>Comparative functional genomics of the fission yeasts.</title>
        <authorList>
            <person name="Rhind N."/>
            <person name="Chen Z."/>
            <person name="Yassour M."/>
            <person name="Thompson D.A."/>
            <person name="Haas B.J."/>
            <person name="Habib N."/>
            <person name="Wapinski I."/>
            <person name="Roy S."/>
            <person name="Lin M.F."/>
            <person name="Heiman D.I."/>
            <person name="Young S.K."/>
            <person name="Furuya K."/>
            <person name="Guo Y."/>
            <person name="Pidoux A."/>
            <person name="Chen H.M."/>
            <person name="Robbertse B."/>
            <person name="Goldberg J.M."/>
            <person name="Aoki K."/>
            <person name="Bayne E.H."/>
            <person name="Berlin A.M."/>
            <person name="Desjardins C.A."/>
            <person name="Dobbs E."/>
            <person name="Dukaj L."/>
            <person name="Fan L."/>
            <person name="FitzGerald M.G."/>
            <person name="French C."/>
            <person name="Gujja S."/>
            <person name="Hansen K."/>
            <person name="Keifenheim D."/>
            <person name="Levin J.Z."/>
            <person name="Mosher R.A."/>
            <person name="Mueller C.A."/>
            <person name="Pfiffner J."/>
            <person name="Priest M."/>
            <person name="Russ C."/>
            <person name="Smialowska A."/>
            <person name="Swoboda P."/>
            <person name="Sykes S.M."/>
            <person name="Vaughn M."/>
            <person name="Vengrova S."/>
            <person name="Yoder R."/>
            <person name="Zeng Q."/>
            <person name="Allshire R."/>
            <person name="Baulcombe D."/>
            <person name="Birren B.W."/>
            <person name="Brown W."/>
            <person name="Ekwall K."/>
            <person name="Kellis M."/>
            <person name="Leatherwood J."/>
            <person name="Levin H."/>
            <person name="Margalit H."/>
            <person name="Martienssen R."/>
            <person name="Nieduszynski C.A."/>
            <person name="Spatafora J.W."/>
            <person name="Friedman N."/>
            <person name="Dalgaard J.Z."/>
            <person name="Baumann P."/>
            <person name="Niki H."/>
            <person name="Regev A."/>
            <person name="Nusbaum C."/>
        </authorList>
    </citation>
    <scope>REVISION OF GENE MODEL</scope>
</reference>
<reference key="3">
    <citation type="journal article" date="2006" name="Nat. Biotechnol.">
        <title>ORFeome cloning and global analysis of protein localization in the fission yeast Schizosaccharomyces pombe.</title>
        <authorList>
            <person name="Matsuyama A."/>
            <person name="Arai R."/>
            <person name="Yashiroda Y."/>
            <person name="Shirai A."/>
            <person name="Kamata A."/>
            <person name="Sekido S."/>
            <person name="Kobayashi Y."/>
            <person name="Hashimoto A."/>
            <person name="Hamamoto M."/>
            <person name="Hiraoka Y."/>
            <person name="Horinouchi S."/>
            <person name="Yoshida M."/>
        </authorList>
    </citation>
    <scope>SUBCELLULAR LOCATION [LARGE SCALE ANALYSIS]</scope>
</reference>
<reference key="4">
    <citation type="journal article" date="2011" name="Genetics">
        <title>Augmented annotation of the Schizosaccharomyces pombe genome reveals additional genes required for growth and viability.</title>
        <authorList>
            <person name="Bitton D.A."/>
            <person name="Wood V."/>
            <person name="Scutt P.J."/>
            <person name="Grallert A."/>
            <person name="Yates T."/>
            <person name="Smith D.L."/>
            <person name="Hagan I.M."/>
            <person name="Miller C.J."/>
        </authorList>
    </citation>
    <scope>REVISION OF GENE MODEL</scope>
</reference>
<dbReference type="EMBL" id="CU329670">
    <property type="protein sequence ID" value="CAB11770.2"/>
    <property type="molecule type" value="Genomic_DNA"/>
</dbReference>
<dbReference type="PIR" id="T37632">
    <property type="entry name" value="T37632"/>
</dbReference>
<dbReference type="SMR" id="O13706"/>
<dbReference type="BioGRID" id="279345">
    <property type="interactions" value="4"/>
</dbReference>
<dbReference type="STRING" id="284812.O13706"/>
<dbReference type="PaxDb" id="4896-SPAC13F5.07c.1"/>
<dbReference type="EnsemblFungi" id="SPAC13F5.07c.1">
    <property type="protein sequence ID" value="SPAC13F5.07c.1:pep"/>
    <property type="gene ID" value="SPAC13F5.07c"/>
</dbReference>
<dbReference type="KEGG" id="spo:2542901"/>
<dbReference type="PomBase" id="SPAC13F5.07c"/>
<dbReference type="VEuPathDB" id="FungiDB:SPAC13F5.07c"/>
<dbReference type="eggNOG" id="ENOG502S5PB">
    <property type="taxonomic scope" value="Eukaryota"/>
</dbReference>
<dbReference type="HOGENOM" id="CLU_1563778_0_0_1"/>
<dbReference type="InParanoid" id="O13706"/>
<dbReference type="OMA" id="RFQSWAW"/>
<dbReference type="PRO" id="PR:O13706"/>
<dbReference type="Proteomes" id="UP000002485">
    <property type="component" value="Chromosome I"/>
</dbReference>
<dbReference type="GO" id="GO:0005829">
    <property type="term" value="C:cytosol"/>
    <property type="evidence" value="ECO:0007005"/>
    <property type="project" value="PomBase"/>
</dbReference>
<dbReference type="GO" id="GO:0005634">
    <property type="term" value="C:nucleus"/>
    <property type="evidence" value="ECO:0007005"/>
    <property type="project" value="PomBase"/>
</dbReference>
<dbReference type="GO" id="GO:0003677">
    <property type="term" value="F:DNA binding"/>
    <property type="evidence" value="ECO:0000255"/>
    <property type="project" value="PomBase"/>
</dbReference>
<dbReference type="GO" id="GO:0008270">
    <property type="term" value="F:zinc ion binding"/>
    <property type="evidence" value="ECO:0007669"/>
    <property type="project" value="UniProtKB-KW"/>
</dbReference>
<dbReference type="Gene3D" id="3.30.1740.10">
    <property type="entry name" value="Zinc finger, PARP-type"/>
    <property type="match status" value="1"/>
</dbReference>
<dbReference type="InterPro" id="IPR001510">
    <property type="entry name" value="Znf_PARP"/>
</dbReference>
<dbReference type="InterPro" id="IPR036957">
    <property type="entry name" value="Znf_PARP_sf"/>
</dbReference>
<dbReference type="Pfam" id="PF00645">
    <property type="entry name" value="zf-PARP"/>
    <property type="match status" value="1"/>
</dbReference>
<dbReference type="SMART" id="SM01336">
    <property type="entry name" value="zf-PARP"/>
    <property type="match status" value="1"/>
</dbReference>
<dbReference type="SUPFAM" id="SSF57716">
    <property type="entry name" value="Glucocorticoid receptor-like (DNA-binding domain)"/>
    <property type="match status" value="1"/>
</dbReference>
<dbReference type="PROSITE" id="PS50064">
    <property type="entry name" value="ZF_PARP_2"/>
    <property type="match status" value="1"/>
</dbReference>
<protein>
    <recommendedName>
        <fullName>PARP-type zinc finger-containing protein C13F5.07c</fullName>
    </recommendedName>
</protein>